<sequence>MLCPICQDTNSRVLESRSAESGKSIRRRRECMNCQHRFTTYERIEFLTITIIKRDGKKESFDKSKLLRGIIRSCEKTGIEVSQLEAFVNQIEVELQGKCQREITSAEIGEIVLSKLSGISEVAYIRFASVYRKFQGIRDFVDTLNHLQNQKENLEFTATVPQNSEISLQQDVINV</sequence>
<keyword id="KW-0067">ATP-binding</keyword>
<keyword id="KW-0238">DNA-binding</keyword>
<keyword id="KW-0479">Metal-binding</keyword>
<keyword id="KW-0547">Nucleotide-binding</keyword>
<keyword id="KW-0678">Repressor</keyword>
<keyword id="KW-0804">Transcription</keyword>
<keyword id="KW-0805">Transcription regulation</keyword>
<keyword id="KW-0862">Zinc</keyword>
<keyword id="KW-0863">Zinc-finger</keyword>
<reference key="1">
    <citation type="journal article" date="2015" name="Proc. Natl. Acad. Sci. U.S.A.">
        <title>Trichodesmium genome maintains abundant, widespread noncoding DNA in situ, despite oligotrophic lifestyle.</title>
        <authorList>
            <person name="Walworth N."/>
            <person name="Pfreundt U."/>
            <person name="Nelson W.C."/>
            <person name="Mincer T."/>
            <person name="Heidelberg J.F."/>
            <person name="Fu F."/>
            <person name="Waterbury J.B."/>
            <person name="Glavina del Rio T."/>
            <person name="Goodwin L."/>
            <person name="Kyrpides N.C."/>
            <person name="Land M.L."/>
            <person name="Woyke T."/>
            <person name="Hutchins D.A."/>
            <person name="Hess W.R."/>
            <person name="Webb E.A."/>
        </authorList>
    </citation>
    <scope>NUCLEOTIDE SEQUENCE [LARGE SCALE GENOMIC DNA]</scope>
    <source>
        <strain>IMS101</strain>
    </source>
</reference>
<proteinExistence type="inferred from homology"/>
<comment type="function">
    <text evidence="1">Negatively regulates transcription of bacterial ribonucleotide reductase nrd genes and operons by binding to NrdR-boxes.</text>
</comment>
<comment type="cofactor">
    <cofactor evidence="1">
        <name>Zn(2+)</name>
        <dbReference type="ChEBI" id="CHEBI:29105"/>
    </cofactor>
    <text evidence="1">Binds 1 zinc ion.</text>
</comment>
<comment type="similarity">
    <text evidence="1">Belongs to the NrdR family.</text>
</comment>
<organism>
    <name type="scientific">Trichodesmium erythraeum (strain IMS101)</name>
    <dbReference type="NCBI Taxonomy" id="203124"/>
    <lineage>
        <taxon>Bacteria</taxon>
        <taxon>Bacillati</taxon>
        <taxon>Cyanobacteriota</taxon>
        <taxon>Cyanophyceae</taxon>
        <taxon>Oscillatoriophycideae</taxon>
        <taxon>Oscillatoriales</taxon>
        <taxon>Microcoleaceae</taxon>
        <taxon>Trichodesmium</taxon>
    </lineage>
</organism>
<gene>
    <name evidence="1" type="primary">nrdR</name>
    <name type="ordered locus">Tery_4664</name>
</gene>
<accession>Q10VU2</accession>
<protein>
    <recommendedName>
        <fullName evidence="1">Transcriptional repressor NrdR</fullName>
    </recommendedName>
</protein>
<name>NRDR_TRIEI</name>
<feature type="chain" id="PRO_0000264229" description="Transcriptional repressor NrdR">
    <location>
        <begin position="1"/>
        <end position="175"/>
    </location>
</feature>
<feature type="domain" description="ATP-cone" evidence="1">
    <location>
        <begin position="49"/>
        <end position="139"/>
    </location>
</feature>
<feature type="zinc finger region" evidence="1">
    <location>
        <begin position="3"/>
        <end position="34"/>
    </location>
</feature>
<evidence type="ECO:0000255" key="1">
    <source>
        <dbReference type="HAMAP-Rule" id="MF_00440"/>
    </source>
</evidence>
<dbReference type="EMBL" id="CP000393">
    <property type="protein sequence ID" value="ABG53632.1"/>
    <property type="molecule type" value="Genomic_DNA"/>
</dbReference>
<dbReference type="RefSeq" id="WP_011613949.1">
    <property type="nucleotide sequence ID" value="NC_008312.1"/>
</dbReference>
<dbReference type="SMR" id="Q10VU2"/>
<dbReference type="STRING" id="203124.Tery_4664"/>
<dbReference type="KEGG" id="ter:Tery_4664"/>
<dbReference type="eggNOG" id="COG1327">
    <property type="taxonomic scope" value="Bacteria"/>
</dbReference>
<dbReference type="HOGENOM" id="CLU_108412_0_0_3"/>
<dbReference type="OrthoDB" id="9807461at2"/>
<dbReference type="GO" id="GO:0005524">
    <property type="term" value="F:ATP binding"/>
    <property type="evidence" value="ECO:0007669"/>
    <property type="project" value="UniProtKB-KW"/>
</dbReference>
<dbReference type="GO" id="GO:0003677">
    <property type="term" value="F:DNA binding"/>
    <property type="evidence" value="ECO:0007669"/>
    <property type="project" value="UniProtKB-KW"/>
</dbReference>
<dbReference type="GO" id="GO:0008270">
    <property type="term" value="F:zinc ion binding"/>
    <property type="evidence" value="ECO:0007669"/>
    <property type="project" value="UniProtKB-UniRule"/>
</dbReference>
<dbReference type="GO" id="GO:0045892">
    <property type="term" value="P:negative regulation of DNA-templated transcription"/>
    <property type="evidence" value="ECO:0007669"/>
    <property type="project" value="UniProtKB-UniRule"/>
</dbReference>
<dbReference type="HAMAP" id="MF_00440">
    <property type="entry name" value="NrdR"/>
    <property type="match status" value="1"/>
</dbReference>
<dbReference type="InterPro" id="IPR005144">
    <property type="entry name" value="ATP-cone_dom"/>
</dbReference>
<dbReference type="InterPro" id="IPR055173">
    <property type="entry name" value="NrdR-like_N"/>
</dbReference>
<dbReference type="InterPro" id="IPR003796">
    <property type="entry name" value="RNR_NrdR-like"/>
</dbReference>
<dbReference type="NCBIfam" id="TIGR00244">
    <property type="entry name" value="transcriptional regulator NrdR"/>
    <property type="match status" value="1"/>
</dbReference>
<dbReference type="PANTHER" id="PTHR30455">
    <property type="entry name" value="TRANSCRIPTIONAL REPRESSOR NRDR"/>
    <property type="match status" value="1"/>
</dbReference>
<dbReference type="PANTHER" id="PTHR30455:SF2">
    <property type="entry name" value="TRANSCRIPTIONAL REPRESSOR NRDR"/>
    <property type="match status" value="1"/>
</dbReference>
<dbReference type="Pfam" id="PF03477">
    <property type="entry name" value="ATP-cone"/>
    <property type="match status" value="1"/>
</dbReference>
<dbReference type="Pfam" id="PF22811">
    <property type="entry name" value="Zn_ribbon_NrdR"/>
    <property type="match status" value="1"/>
</dbReference>
<dbReference type="PROSITE" id="PS51161">
    <property type="entry name" value="ATP_CONE"/>
    <property type="match status" value="1"/>
</dbReference>